<keyword id="KW-0963">Cytoplasm</keyword>
<keyword id="KW-0539">Nucleus</keyword>
<keyword id="KW-0647">Proteasome</keyword>
<keyword id="KW-1185">Reference proteome</keyword>
<feature type="chain" id="PRO_0000148046" description="Proteasome subunit beta type-2">
    <location>
        <begin position="1"/>
        <end position="199"/>
    </location>
</feature>
<evidence type="ECO:0000250" key="1"/>
<evidence type="ECO:0000255" key="2">
    <source>
        <dbReference type="PROSITE-ProRule" id="PRU00809"/>
    </source>
</evidence>
<evidence type="ECO:0000305" key="3"/>
<dbReference type="EMBL" id="FO080916">
    <property type="protein sequence ID" value="CCD67779.1"/>
    <property type="status" value="ALT_INIT"/>
    <property type="molecule type" value="Genomic_DNA"/>
</dbReference>
<dbReference type="PIR" id="T29206">
    <property type="entry name" value="T29206"/>
</dbReference>
<dbReference type="RefSeq" id="NP_491261.1">
    <property type="nucleotide sequence ID" value="NM_058860.6"/>
</dbReference>
<dbReference type="SMR" id="P91477"/>
<dbReference type="BioGRID" id="37448">
    <property type="interactions" value="37"/>
</dbReference>
<dbReference type="FunCoup" id="P91477">
    <property type="interactions" value="2320"/>
</dbReference>
<dbReference type="IntAct" id="P91477">
    <property type="interactions" value="1"/>
</dbReference>
<dbReference type="STRING" id="6239.T20F5.2.1"/>
<dbReference type="MEROPS" id="T01.984"/>
<dbReference type="PaxDb" id="6239-T20F5.2"/>
<dbReference type="PeptideAtlas" id="P91477"/>
<dbReference type="EnsemblMetazoa" id="T20F5.2.1">
    <property type="protein sequence ID" value="T20F5.2.1"/>
    <property type="gene ID" value="WBGene00003950"/>
</dbReference>
<dbReference type="GeneID" id="171975"/>
<dbReference type="KEGG" id="cel:CELE_T20F5.2"/>
<dbReference type="UCSC" id="T20F5.2">
    <property type="organism name" value="c. elegans"/>
</dbReference>
<dbReference type="AGR" id="WB:WBGene00003950"/>
<dbReference type="CTD" id="171975"/>
<dbReference type="WormBase" id="T20F5.2">
    <property type="protein sequence ID" value="CE13818"/>
    <property type="gene ID" value="WBGene00003950"/>
    <property type="gene designation" value="pbs-4"/>
</dbReference>
<dbReference type="eggNOG" id="KOG0177">
    <property type="taxonomic scope" value="Eukaryota"/>
</dbReference>
<dbReference type="GeneTree" id="ENSGT00640000091536"/>
<dbReference type="HOGENOM" id="CLU_035750_12_1_1"/>
<dbReference type="InParanoid" id="P91477"/>
<dbReference type="OrthoDB" id="268428at2759"/>
<dbReference type="PhylomeDB" id="P91477"/>
<dbReference type="Reactome" id="R-CEL-1234176">
    <property type="pathway name" value="Oxygen-dependent proline hydroxylation of Hypoxia-inducible Factor Alpha"/>
</dbReference>
<dbReference type="Reactome" id="R-CEL-1236978">
    <property type="pathway name" value="Cross-presentation of soluble exogenous antigens (endosomes)"/>
</dbReference>
<dbReference type="Reactome" id="R-CEL-187577">
    <property type="pathway name" value="SCF(Skp2)-mediated degradation of p27/p21"/>
</dbReference>
<dbReference type="Reactome" id="R-CEL-195253">
    <property type="pathway name" value="Degradation of beta-catenin by the destruction complex"/>
</dbReference>
<dbReference type="Reactome" id="R-CEL-349425">
    <property type="pathway name" value="Autodegradation of the E3 ubiquitin ligase COP1"/>
</dbReference>
<dbReference type="Reactome" id="R-CEL-350562">
    <property type="pathway name" value="Regulation of ornithine decarboxylase (ODC)"/>
</dbReference>
<dbReference type="Reactome" id="R-CEL-382556">
    <property type="pathway name" value="ABC-family proteins mediated transport"/>
</dbReference>
<dbReference type="Reactome" id="R-CEL-4608870">
    <property type="pathway name" value="Asymmetric localization of PCP proteins"/>
</dbReference>
<dbReference type="Reactome" id="R-CEL-4641258">
    <property type="pathway name" value="Degradation of DVL"/>
</dbReference>
<dbReference type="Reactome" id="R-CEL-5632684">
    <property type="pathway name" value="Hedgehog 'on' state"/>
</dbReference>
<dbReference type="Reactome" id="R-CEL-5687128">
    <property type="pathway name" value="MAPK6/MAPK4 signaling"/>
</dbReference>
<dbReference type="Reactome" id="R-CEL-5689603">
    <property type="pathway name" value="UCH proteinases"/>
</dbReference>
<dbReference type="Reactome" id="R-CEL-5689880">
    <property type="pathway name" value="Ub-specific processing proteases"/>
</dbReference>
<dbReference type="Reactome" id="R-CEL-68949">
    <property type="pathway name" value="Orc1 removal from chromatin"/>
</dbReference>
<dbReference type="Reactome" id="R-CEL-69017">
    <property type="pathway name" value="CDK-mediated phosphorylation and removal of Cdc6"/>
</dbReference>
<dbReference type="Reactome" id="R-CEL-69601">
    <property type="pathway name" value="Ubiquitin Mediated Degradation of Phosphorylated Cdc25A"/>
</dbReference>
<dbReference type="Reactome" id="R-CEL-75815">
    <property type="pathway name" value="Ubiquitin-dependent degradation of Cyclin D"/>
</dbReference>
<dbReference type="Reactome" id="R-CEL-8854050">
    <property type="pathway name" value="FBXL7 down-regulates AURKA during mitotic entry and in early mitosis"/>
</dbReference>
<dbReference type="Reactome" id="R-CEL-8939902">
    <property type="pathway name" value="Regulation of RUNX2 expression and activity"/>
</dbReference>
<dbReference type="Reactome" id="R-CEL-8941858">
    <property type="pathway name" value="Regulation of RUNX3 expression and activity"/>
</dbReference>
<dbReference type="Reactome" id="R-CEL-8948751">
    <property type="pathway name" value="Regulation of PTEN stability and activity"/>
</dbReference>
<dbReference type="Reactome" id="R-CEL-8951664">
    <property type="pathway name" value="Neddylation"/>
</dbReference>
<dbReference type="Reactome" id="R-CEL-9755511">
    <property type="pathway name" value="KEAP1-NFE2L2 pathway"/>
</dbReference>
<dbReference type="Reactome" id="R-CEL-9762114">
    <property type="pathway name" value="GSK3B and BTRC:CUL1-mediated-degradation of NFE2L2"/>
</dbReference>
<dbReference type="Reactome" id="R-CEL-983168">
    <property type="pathway name" value="Antigen processing: Ubiquitination &amp; Proteasome degradation"/>
</dbReference>
<dbReference type="Reactome" id="R-CEL-9907900">
    <property type="pathway name" value="Proteasome assembly"/>
</dbReference>
<dbReference type="PRO" id="PR:P91477"/>
<dbReference type="Proteomes" id="UP000001940">
    <property type="component" value="Chromosome I"/>
</dbReference>
<dbReference type="Bgee" id="WBGene00003950">
    <property type="expression patterns" value="Expressed in adult organism and 4 other cell types or tissues"/>
</dbReference>
<dbReference type="GO" id="GO:0005829">
    <property type="term" value="C:cytosol"/>
    <property type="evidence" value="ECO:0000318"/>
    <property type="project" value="GO_Central"/>
</dbReference>
<dbReference type="GO" id="GO:0005634">
    <property type="term" value="C:nucleus"/>
    <property type="evidence" value="ECO:0000318"/>
    <property type="project" value="GO_Central"/>
</dbReference>
<dbReference type="GO" id="GO:0019774">
    <property type="term" value="C:proteasome core complex, beta-subunit complex"/>
    <property type="evidence" value="ECO:0000250"/>
    <property type="project" value="UniProtKB"/>
</dbReference>
<dbReference type="GO" id="GO:0043161">
    <property type="term" value="P:proteasome-mediated ubiquitin-dependent protein catabolic process"/>
    <property type="evidence" value="ECO:0000318"/>
    <property type="project" value="GO_Central"/>
</dbReference>
<dbReference type="CDD" id="cd03758">
    <property type="entry name" value="proteasome_beta_type_2"/>
    <property type="match status" value="1"/>
</dbReference>
<dbReference type="FunFam" id="3.60.20.10:FF:000091">
    <property type="entry name" value="Proteasome subunit beta"/>
    <property type="match status" value="1"/>
</dbReference>
<dbReference type="Gene3D" id="3.60.20.10">
    <property type="entry name" value="Glutamine Phosphoribosylpyrophosphate, subunit 1, domain 1"/>
    <property type="match status" value="1"/>
</dbReference>
<dbReference type="InterPro" id="IPR029055">
    <property type="entry name" value="Ntn_hydrolases_N"/>
</dbReference>
<dbReference type="InterPro" id="IPR035206">
    <property type="entry name" value="Proteasome_beta2"/>
</dbReference>
<dbReference type="InterPro" id="IPR001353">
    <property type="entry name" value="Proteasome_sua/b"/>
</dbReference>
<dbReference type="InterPro" id="IPR023333">
    <property type="entry name" value="Proteasome_suB-type"/>
</dbReference>
<dbReference type="PANTHER" id="PTHR32194">
    <property type="entry name" value="METALLOPROTEASE TLDD"/>
    <property type="match status" value="1"/>
</dbReference>
<dbReference type="PANTHER" id="PTHR32194:SF2">
    <property type="entry name" value="PROTEASOME SUBUNIT BETA TYPE-1"/>
    <property type="match status" value="1"/>
</dbReference>
<dbReference type="Pfam" id="PF00227">
    <property type="entry name" value="Proteasome"/>
    <property type="match status" value="1"/>
</dbReference>
<dbReference type="SUPFAM" id="SSF56235">
    <property type="entry name" value="N-terminal nucleophile aminohydrolases (Ntn hydrolases)"/>
    <property type="match status" value="1"/>
</dbReference>
<dbReference type="PROSITE" id="PS51476">
    <property type="entry name" value="PROTEASOME_BETA_2"/>
    <property type="match status" value="1"/>
</dbReference>
<comment type="function">
    <text evidence="1">Non-catalytic component of the proteasome, a multicatalytic proteinase complex which is characterized by its ability to cleave peptides with Arg, Phe, Tyr, Leu, and Glu adjacent to the leaving group at neutral or slightly basic pH. The proteasome has an ATP-dependent proteolytic activity (By similarity).</text>
</comment>
<comment type="subunit">
    <text evidence="1">The 26S proteasome consists of a 20S proteasome core and two 19S regulatory subunits. The 20S proteasome core is composed of 28 subunits that are arranged in four stacked rings, resulting in a barrel-shaped structure. The two end rings are each formed by seven alpha subunits, and the two central rings are each formed by seven beta subunits. The catalytic chamber with the active sites is on the inside of the barrel (By similarity).</text>
</comment>
<comment type="subcellular location">
    <subcellularLocation>
        <location evidence="2">Cytoplasm</location>
    </subcellularLocation>
    <subcellularLocation>
        <location evidence="1">Nucleus</location>
    </subcellularLocation>
</comment>
<comment type="similarity">
    <text evidence="2">Belongs to the peptidase T1B family.</text>
</comment>
<comment type="sequence caution" evidence="3">
    <conflict type="erroneous initiation">
        <sequence resource="EMBL-CDS" id="CCD67779"/>
    </conflict>
</comment>
<sequence length="199" mass="22549">MHFLVGISTENYVILAADKATFAYGAILADSENDKEYRLGKKLTMMCIGEEGDVAQFGDWTKRNLQLYSVRNGYEVSPSCAHHFVRRSIAEGLRSQDHYTVDVLIGGYDDKEDKAFLGSVDYLANGLGQQPYLFRGFCGRFCYAIMDREYKKDMTEAEGLALMNKCIGEAKRRFVANIPGYKVVIIDKKGYRKLDDVLF</sequence>
<protein>
    <recommendedName>
        <fullName>Proteasome subunit beta type-2</fullName>
    </recommendedName>
    <alternativeName>
        <fullName>Proteasome subunit beta 4</fullName>
    </alternativeName>
</protein>
<reference key="1">
    <citation type="journal article" date="1998" name="Science">
        <title>Genome sequence of the nematode C. elegans: a platform for investigating biology.</title>
        <authorList>
            <consortium name="The C. elegans sequencing consortium"/>
        </authorList>
    </citation>
    <scope>NUCLEOTIDE SEQUENCE [LARGE SCALE GENOMIC DNA]</scope>
    <source>
        <strain>Bristol N2</strain>
    </source>
</reference>
<organism>
    <name type="scientific">Caenorhabditis elegans</name>
    <dbReference type="NCBI Taxonomy" id="6239"/>
    <lineage>
        <taxon>Eukaryota</taxon>
        <taxon>Metazoa</taxon>
        <taxon>Ecdysozoa</taxon>
        <taxon>Nematoda</taxon>
        <taxon>Chromadorea</taxon>
        <taxon>Rhabditida</taxon>
        <taxon>Rhabditina</taxon>
        <taxon>Rhabditomorpha</taxon>
        <taxon>Rhabditoidea</taxon>
        <taxon>Rhabditidae</taxon>
        <taxon>Peloderinae</taxon>
        <taxon>Caenorhabditis</taxon>
    </lineage>
</organism>
<name>PSB2_CAEEL</name>
<proteinExistence type="inferred from homology"/>
<accession>P91477</accession>
<gene>
    <name type="primary">pbs-4</name>
    <name type="ORF">T20F5.2</name>
</gene>